<dbReference type="EC" id="2.4.1.182" evidence="1"/>
<dbReference type="EMBL" id="BX248583">
    <property type="protein sequence ID" value="CAD83355.1"/>
    <property type="molecule type" value="Genomic_DNA"/>
</dbReference>
<dbReference type="SMR" id="Q7VRD3"/>
<dbReference type="STRING" id="203907.Bfl284"/>
<dbReference type="CAZy" id="GT19">
    <property type="family name" value="Glycosyltransferase Family 19"/>
</dbReference>
<dbReference type="KEGG" id="bfl:Bfl284"/>
<dbReference type="eggNOG" id="COG0763">
    <property type="taxonomic scope" value="Bacteria"/>
</dbReference>
<dbReference type="HOGENOM" id="CLU_036577_3_0_6"/>
<dbReference type="OrthoDB" id="9801642at2"/>
<dbReference type="UniPathway" id="UPA00359">
    <property type="reaction ID" value="UER00481"/>
</dbReference>
<dbReference type="Proteomes" id="UP000002192">
    <property type="component" value="Chromosome"/>
</dbReference>
<dbReference type="GO" id="GO:0016020">
    <property type="term" value="C:membrane"/>
    <property type="evidence" value="ECO:0007669"/>
    <property type="project" value="GOC"/>
</dbReference>
<dbReference type="GO" id="GO:0008915">
    <property type="term" value="F:lipid-A-disaccharide synthase activity"/>
    <property type="evidence" value="ECO:0007669"/>
    <property type="project" value="UniProtKB-UniRule"/>
</dbReference>
<dbReference type="GO" id="GO:0005543">
    <property type="term" value="F:phospholipid binding"/>
    <property type="evidence" value="ECO:0007669"/>
    <property type="project" value="TreeGrafter"/>
</dbReference>
<dbReference type="GO" id="GO:0009245">
    <property type="term" value="P:lipid A biosynthetic process"/>
    <property type="evidence" value="ECO:0007669"/>
    <property type="project" value="UniProtKB-UniRule"/>
</dbReference>
<dbReference type="CDD" id="cd01635">
    <property type="entry name" value="Glycosyltransferase_GTB-type"/>
    <property type="match status" value="1"/>
</dbReference>
<dbReference type="HAMAP" id="MF_00392">
    <property type="entry name" value="LpxB"/>
    <property type="match status" value="1"/>
</dbReference>
<dbReference type="InterPro" id="IPR003835">
    <property type="entry name" value="Glyco_trans_19"/>
</dbReference>
<dbReference type="NCBIfam" id="TIGR00215">
    <property type="entry name" value="lpxB"/>
    <property type="match status" value="1"/>
</dbReference>
<dbReference type="PANTHER" id="PTHR30372">
    <property type="entry name" value="LIPID-A-DISACCHARIDE SYNTHASE"/>
    <property type="match status" value="1"/>
</dbReference>
<dbReference type="PANTHER" id="PTHR30372:SF4">
    <property type="entry name" value="LIPID-A-DISACCHARIDE SYNTHASE, MITOCHONDRIAL-RELATED"/>
    <property type="match status" value="1"/>
</dbReference>
<dbReference type="Pfam" id="PF02684">
    <property type="entry name" value="LpxB"/>
    <property type="match status" value="1"/>
</dbReference>
<dbReference type="SUPFAM" id="SSF53756">
    <property type="entry name" value="UDP-Glycosyltransferase/glycogen phosphorylase"/>
    <property type="match status" value="1"/>
</dbReference>
<sequence>MINNRSVIIGIVVGENSGDILGVGLIRSLKKCFKKVQFFGIGGFRMRSENMECWYDISELSIMGITGVIFRLPKLLNMRRELIKRFLKLKLNIFIGIDFPDFNISLEKRLKKYGITTIHYVSPSIWAWRSNRVFALKEATHNVLLLFPFEKSIYARCGIPNQFIGHPLADEIPLYPNKIALRQKFDIPSNRCCLAILPGSRPKEIQILTKIFMHCAKLLQDTIPNLEILIPLHDTDLINQFVTLTSFISVKFRVLHTLTAWEVMAAADAALLTSGTATLECMLAKCPMVVAYRMNPVIFMLIRHLIKVKWISLPNLLAGKPIVQEFIQKKCDPQRLASSLFYLLNYNQEQRTTLQQEFYHLHRSIKLHANDQATRLILKYINLL</sequence>
<proteinExistence type="inferred from homology"/>
<name>LPXB_BLOFL</name>
<accession>Q7VRD3</accession>
<evidence type="ECO:0000255" key="1">
    <source>
        <dbReference type="HAMAP-Rule" id="MF_00392"/>
    </source>
</evidence>
<keyword id="KW-0328">Glycosyltransferase</keyword>
<keyword id="KW-0441">Lipid A biosynthesis</keyword>
<keyword id="KW-0444">Lipid biosynthesis</keyword>
<keyword id="KW-0443">Lipid metabolism</keyword>
<keyword id="KW-1185">Reference proteome</keyword>
<keyword id="KW-0808">Transferase</keyword>
<organism>
    <name type="scientific">Blochmanniella floridana</name>
    <dbReference type="NCBI Taxonomy" id="203907"/>
    <lineage>
        <taxon>Bacteria</taxon>
        <taxon>Pseudomonadati</taxon>
        <taxon>Pseudomonadota</taxon>
        <taxon>Gammaproteobacteria</taxon>
        <taxon>Enterobacterales</taxon>
        <taxon>Enterobacteriaceae</taxon>
        <taxon>ant endosymbionts</taxon>
        <taxon>Candidatus Blochmanniella</taxon>
    </lineage>
</organism>
<reference key="1">
    <citation type="journal article" date="2003" name="Proc. Natl. Acad. Sci. U.S.A.">
        <title>The genome sequence of Blochmannia floridanus: comparative analysis of reduced genomes.</title>
        <authorList>
            <person name="Gil R."/>
            <person name="Silva F.J."/>
            <person name="Zientz E."/>
            <person name="Delmotte F."/>
            <person name="Gonzalez-Candelas F."/>
            <person name="Latorre A."/>
            <person name="Rausell C."/>
            <person name="Kamerbeek J."/>
            <person name="Gadau J."/>
            <person name="Hoelldobler B."/>
            <person name="van Ham R.C.H.J."/>
            <person name="Gross R."/>
            <person name="Moya A."/>
        </authorList>
    </citation>
    <scope>NUCLEOTIDE SEQUENCE [LARGE SCALE GENOMIC DNA]</scope>
</reference>
<gene>
    <name evidence="1" type="primary">lpxB</name>
    <name type="ordered locus">Bfl284</name>
</gene>
<feature type="chain" id="PRO_0000190157" description="Lipid-A-disaccharide synthase">
    <location>
        <begin position="1"/>
        <end position="384"/>
    </location>
</feature>
<comment type="function">
    <text evidence="1">Condensation of UDP-2,3-diacylglucosamine and 2,3-diacylglucosamine-1-phosphate to form lipid A disaccharide, a precursor of lipid A, a phosphorylated glycolipid that anchors the lipopolysaccharide to the outer membrane of the cell.</text>
</comment>
<comment type="catalytic activity">
    <reaction evidence="1">
        <text>2-N,3-O-bis[(3R)-3-hydroxytetradecanoyl]-alpha-D-glucosaminyl 1-phosphate + UDP-2-N,3-O-bis[(3R)-3-hydroxytetradecanoyl]-alpha-D-glucosamine = lipid A disaccharide (E. coli) + UDP + H(+)</text>
        <dbReference type="Rhea" id="RHEA:22668"/>
        <dbReference type="ChEBI" id="CHEBI:15378"/>
        <dbReference type="ChEBI" id="CHEBI:57957"/>
        <dbReference type="ChEBI" id="CHEBI:58223"/>
        <dbReference type="ChEBI" id="CHEBI:58466"/>
        <dbReference type="ChEBI" id="CHEBI:78847"/>
    </reaction>
</comment>
<comment type="catalytic activity">
    <reaction evidence="1">
        <text>a lipid X + a UDP-2-N,3-O-bis[(3R)-3-hydroxyacyl]-alpha-D-glucosamine = a lipid A disaccharide + UDP + H(+)</text>
        <dbReference type="Rhea" id="RHEA:67828"/>
        <dbReference type="ChEBI" id="CHEBI:15378"/>
        <dbReference type="ChEBI" id="CHEBI:58223"/>
        <dbReference type="ChEBI" id="CHEBI:137748"/>
        <dbReference type="ChEBI" id="CHEBI:176338"/>
        <dbReference type="ChEBI" id="CHEBI:176343"/>
        <dbReference type="EC" id="2.4.1.182"/>
    </reaction>
</comment>
<comment type="pathway">
    <text evidence="1">Glycolipid biosynthesis; lipid IV(A) biosynthesis; lipid IV(A) from (3R)-3-hydroxytetradecanoyl-[acyl-carrier-protein] and UDP-N-acetyl-alpha-D-glucosamine: step 5/6.</text>
</comment>
<comment type="similarity">
    <text evidence="1">Belongs to the LpxB family.</text>
</comment>
<protein>
    <recommendedName>
        <fullName evidence="1">Lipid-A-disaccharide synthase</fullName>
        <ecNumber evidence="1">2.4.1.182</ecNumber>
    </recommendedName>
</protein>